<reference key="1">
    <citation type="journal article" date="2003" name="Proc. Natl. Acad. Sci. U.S.A.">
        <title>Complete genome sequence and analysis of Wolinella succinogenes.</title>
        <authorList>
            <person name="Baar C."/>
            <person name="Eppinger M."/>
            <person name="Raddatz G."/>
            <person name="Simon J."/>
            <person name="Lanz C."/>
            <person name="Klimmek O."/>
            <person name="Nandakumar R."/>
            <person name="Gross R."/>
            <person name="Rosinus A."/>
            <person name="Keller H."/>
            <person name="Jagtap P."/>
            <person name="Linke B."/>
            <person name="Meyer F."/>
            <person name="Lederer H."/>
            <person name="Schuster S.C."/>
        </authorList>
    </citation>
    <scope>NUCLEOTIDE SEQUENCE [LARGE SCALE GENOMIC DNA]</scope>
    <source>
        <strain>ATCC 29543 / DSM 1740 / CCUG 13145 / JCM 31913 / LMG 7466 / NCTC 11488 / FDC 602W</strain>
    </source>
</reference>
<sequence length="416" mass="45667">MNYALETNDKEIFDLIHEELDRQNTHLEMIASENFTFPAVMEAMGSVLTNKYAEGYPYKRYYGGCEFVDRVEEIAIERAKKLFGCGFANVQPHAGSQANVAVYNALLKPYDKILGMDLSHGGHLTHGAKVSVTGQTYQSFFYGVELDGYINYDKVEEIAKIVKPQMIVCGFSAYARELDFKRFREIADSVGALLLGDVAHVAGLIVAGEYPNPFPHCHIVTTTTHKTLRGPRGGMILTNDEEIAKKIDKAVFPGMQGGPLMHVIAAKAVGFGENLKPEWKEYAKQVKANAKVLAKVLMARGYTLVSGGTDNHLILVSLLDKEFSGKDADRALGEAGITVNKNTVPGETRSPFVTSGVRIGSAALTARGMREKEFEFIATKIADVLDDVNNAAKHAEIKKEIAEFAKGFPVYTKAIF</sequence>
<feature type="chain" id="PRO_0000113700" description="Serine hydroxymethyltransferase">
    <location>
        <begin position="1"/>
        <end position="416"/>
    </location>
</feature>
<feature type="binding site" evidence="1">
    <location>
        <position position="118"/>
    </location>
    <ligand>
        <name>(6S)-5,6,7,8-tetrahydrofolate</name>
        <dbReference type="ChEBI" id="CHEBI:57453"/>
    </ligand>
</feature>
<feature type="binding site" evidence="1">
    <location>
        <begin position="122"/>
        <end position="124"/>
    </location>
    <ligand>
        <name>(6S)-5,6,7,8-tetrahydrofolate</name>
        <dbReference type="ChEBI" id="CHEBI:57453"/>
    </ligand>
</feature>
<feature type="binding site" evidence="1">
    <location>
        <position position="242"/>
    </location>
    <ligand>
        <name>(6S)-5,6,7,8-tetrahydrofolate</name>
        <dbReference type="ChEBI" id="CHEBI:57453"/>
    </ligand>
</feature>
<feature type="binding site" evidence="1">
    <location>
        <begin position="350"/>
        <end position="352"/>
    </location>
    <ligand>
        <name>(6S)-5,6,7,8-tetrahydrofolate</name>
        <dbReference type="ChEBI" id="CHEBI:57453"/>
    </ligand>
</feature>
<feature type="site" description="Plays an important role in substrate specificity" evidence="1">
    <location>
        <position position="225"/>
    </location>
</feature>
<feature type="modified residue" description="N6-(pyridoxal phosphate)lysine" evidence="1">
    <location>
        <position position="226"/>
    </location>
</feature>
<gene>
    <name evidence="1" type="primary">glyA</name>
    <name type="ordered locus">WS0085</name>
</gene>
<proteinExistence type="inferred from homology"/>
<dbReference type="EC" id="2.1.2.1" evidence="1"/>
<dbReference type="EMBL" id="BX571657">
    <property type="protein sequence ID" value="CAE09253.1"/>
    <property type="molecule type" value="Genomic_DNA"/>
</dbReference>
<dbReference type="RefSeq" id="WP_011138053.1">
    <property type="nucleotide sequence ID" value="NC_005090.1"/>
</dbReference>
<dbReference type="SMR" id="Q7MAR0"/>
<dbReference type="STRING" id="273121.WS0085"/>
<dbReference type="KEGG" id="wsu:WS0085"/>
<dbReference type="eggNOG" id="COG0112">
    <property type="taxonomic scope" value="Bacteria"/>
</dbReference>
<dbReference type="HOGENOM" id="CLU_022477_2_1_7"/>
<dbReference type="UniPathway" id="UPA00193"/>
<dbReference type="UniPathway" id="UPA00288">
    <property type="reaction ID" value="UER01023"/>
</dbReference>
<dbReference type="Proteomes" id="UP000000422">
    <property type="component" value="Chromosome"/>
</dbReference>
<dbReference type="GO" id="GO:0005829">
    <property type="term" value="C:cytosol"/>
    <property type="evidence" value="ECO:0007669"/>
    <property type="project" value="TreeGrafter"/>
</dbReference>
<dbReference type="GO" id="GO:0004372">
    <property type="term" value="F:glycine hydroxymethyltransferase activity"/>
    <property type="evidence" value="ECO:0007669"/>
    <property type="project" value="UniProtKB-UniRule"/>
</dbReference>
<dbReference type="GO" id="GO:0030170">
    <property type="term" value="F:pyridoxal phosphate binding"/>
    <property type="evidence" value="ECO:0007669"/>
    <property type="project" value="UniProtKB-UniRule"/>
</dbReference>
<dbReference type="GO" id="GO:0019264">
    <property type="term" value="P:glycine biosynthetic process from serine"/>
    <property type="evidence" value="ECO:0007669"/>
    <property type="project" value="UniProtKB-UniRule"/>
</dbReference>
<dbReference type="GO" id="GO:0035999">
    <property type="term" value="P:tetrahydrofolate interconversion"/>
    <property type="evidence" value="ECO:0007669"/>
    <property type="project" value="UniProtKB-UniRule"/>
</dbReference>
<dbReference type="CDD" id="cd00378">
    <property type="entry name" value="SHMT"/>
    <property type="match status" value="1"/>
</dbReference>
<dbReference type="FunFam" id="3.40.640.10:FF:000001">
    <property type="entry name" value="Serine hydroxymethyltransferase"/>
    <property type="match status" value="1"/>
</dbReference>
<dbReference type="Gene3D" id="3.90.1150.10">
    <property type="entry name" value="Aspartate Aminotransferase, domain 1"/>
    <property type="match status" value="1"/>
</dbReference>
<dbReference type="Gene3D" id="3.40.640.10">
    <property type="entry name" value="Type I PLP-dependent aspartate aminotransferase-like (Major domain)"/>
    <property type="match status" value="1"/>
</dbReference>
<dbReference type="HAMAP" id="MF_00051">
    <property type="entry name" value="SHMT"/>
    <property type="match status" value="1"/>
</dbReference>
<dbReference type="InterPro" id="IPR015424">
    <property type="entry name" value="PyrdxlP-dep_Trfase"/>
</dbReference>
<dbReference type="InterPro" id="IPR015421">
    <property type="entry name" value="PyrdxlP-dep_Trfase_major"/>
</dbReference>
<dbReference type="InterPro" id="IPR015422">
    <property type="entry name" value="PyrdxlP-dep_Trfase_small"/>
</dbReference>
<dbReference type="InterPro" id="IPR001085">
    <property type="entry name" value="Ser_HO-MeTrfase"/>
</dbReference>
<dbReference type="InterPro" id="IPR049943">
    <property type="entry name" value="Ser_HO-MeTrfase-like"/>
</dbReference>
<dbReference type="InterPro" id="IPR019798">
    <property type="entry name" value="Ser_HO-MeTrfase_PLP_BS"/>
</dbReference>
<dbReference type="InterPro" id="IPR039429">
    <property type="entry name" value="SHMT-like_dom"/>
</dbReference>
<dbReference type="NCBIfam" id="NF000586">
    <property type="entry name" value="PRK00011.1"/>
    <property type="match status" value="1"/>
</dbReference>
<dbReference type="PANTHER" id="PTHR11680">
    <property type="entry name" value="SERINE HYDROXYMETHYLTRANSFERASE"/>
    <property type="match status" value="1"/>
</dbReference>
<dbReference type="PANTHER" id="PTHR11680:SF50">
    <property type="entry name" value="SERINE HYDROXYMETHYLTRANSFERASE"/>
    <property type="match status" value="1"/>
</dbReference>
<dbReference type="Pfam" id="PF00464">
    <property type="entry name" value="SHMT"/>
    <property type="match status" value="1"/>
</dbReference>
<dbReference type="PIRSF" id="PIRSF000412">
    <property type="entry name" value="SHMT"/>
    <property type="match status" value="1"/>
</dbReference>
<dbReference type="SUPFAM" id="SSF53383">
    <property type="entry name" value="PLP-dependent transferases"/>
    <property type="match status" value="1"/>
</dbReference>
<dbReference type="PROSITE" id="PS00096">
    <property type="entry name" value="SHMT"/>
    <property type="match status" value="1"/>
</dbReference>
<protein>
    <recommendedName>
        <fullName evidence="1">Serine hydroxymethyltransferase</fullName>
        <shortName evidence="1">SHMT</shortName>
        <shortName evidence="1">Serine methylase</shortName>
        <ecNumber evidence="1">2.1.2.1</ecNumber>
    </recommendedName>
</protein>
<evidence type="ECO:0000255" key="1">
    <source>
        <dbReference type="HAMAP-Rule" id="MF_00051"/>
    </source>
</evidence>
<keyword id="KW-0028">Amino-acid biosynthesis</keyword>
<keyword id="KW-0963">Cytoplasm</keyword>
<keyword id="KW-0554">One-carbon metabolism</keyword>
<keyword id="KW-0663">Pyridoxal phosphate</keyword>
<keyword id="KW-1185">Reference proteome</keyword>
<keyword id="KW-0808">Transferase</keyword>
<name>GLYA_WOLSU</name>
<accession>Q7MAR0</accession>
<organism>
    <name type="scientific">Wolinella succinogenes (strain ATCC 29543 / DSM 1740 / CCUG 13145 / JCM 31913 / LMG 7466 / NCTC 11488 / FDC 602W)</name>
    <name type="common">Vibrio succinogenes</name>
    <dbReference type="NCBI Taxonomy" id="273121"/>
    <lineage>
        <taxon>Bacteria</taxon>
        <taxon>Pseudomonadati</taxon>
        <taxon>Campylobacterota</taxon>
        <taxon>Epsilonproteobacteria</taxon>
        <taxon>Campylobacterales</taxon>
        <taxon>Helicobacteraceae</taxon>
        <taxon>Wolinella</taxon>
    </lineage>
</organism>
<comment type="function">
    <text evidence="1">Catalyzes the reversible interconversion of serine and glycine with tetrahydrofolate (THF) serving as the one-carbon carrier. This reaction serves as the major source of one-carbon groups required for the biosynthesis of purines, thymidylate, methionine, and other important biomolecules. Also exhibits THF-independent aldolase activity toward beta-hydroxyamino acids, producing glycine and aldehydes, via a retro-aldol mechanism.</text>
</comment>
<comment type="catalytic activity">
    <reaction evidence="1">
        <text>(6R)-5,10-methylene-5,6,7,8-tetrahydrofolate + glycine + H2O = (6S)-5,6,7,8-tetrahydrofolate + L-serine</text>
        <dbReference type="Rhea" id="RHEA:15481"/>
        <dbReference type="ChEBI" id="CHEBI:15377"/>
        <dbReference type="ChEBI" id="CHEBI:15636"/>
        <dbReference type="ChEBI" id="CHEBI:33384"/>
        <dbReference type="ChEBI" id="CHEBI:57305"/>
        <dbReference type="ChEBI" id="CHEBI:57453"/>
        <dbReference type="EC" id="2.1.2.1"/>
    </reaction>
</comment>
<comment type="cofactor">
    <cofactor evidence="1">
        <name>pyridoxal 5'-phosphate</name>
        <dbReference type="ChEBI" id="CHEBI:597326"/>
    </cofactor>
</comment>
<comment type="pathway">
    <text evidence="1">One-carbon metabolism; tetrahydrofolate interconversion.</text>
</comment>
<comment type="pathway">
    <text evidence="1">Amino-acid biosynthesis; glycine biosynthesis; glycine from L-serine: step 1/1.</text>
</comment>
<comment type="subunit">
    <text evidence="1">Homodimer.</text>
</comment>
<comment type="subcellular location">
    <subcellularLocation>
        <location evidence="1">Cytoplasm</location>
    </subcellularLocation>
</comment>
<comment type="similarity">
    <text evidence="1">Belongs to the SHMT family.</text>
</comment>